<comment type="function">
    <text evidence="1">Binds to the 23S rRNA.</text>
</comment>
<comment type="subunit">
    <text evidence="1">Part of the 50S ribosomal subunit.</text>
</comment>
<comment type="similarity">
    <text evidence="1">Belongs to the universal ribosomal protein uL15 family.</text>
</comment>
<dbReference type="EMBL" id="CP000438">
    <property type="protein sequence ID" value="ABJ13515.1"/>
    <property type="molecule type" value="Genomic_DNA"/>
</dbReference>
<dbReference type="RefSeq" id="WP_003093695.1">
    <property type="nucleotide sequence ID" value="NZ_CP034244.1"/>
</dbReference>
<dbReference type="SMR" id="Q02T61"/>
<dbReference type="GeneID" id="77219217"/>
<dbReference type="KEGG" id="pau:PA14_09040"/>
<dbReference type="PseudoCAP" id="PA14_09040"/>
<dbReference type="HOGENOM" id="CLU_055188_4_2_6"/>
<dbReference type="BioCyc" id="PAER208963:G1G74-755-MONOMER"/>
<dbReference type="Proteomes" id="UP000000653">
    <property type="component" value="Chromosome"/>
</dbReference>
<dbReference type="GO" id="GO:0022625">
    <property type="term" value="C:cytosolic large ribosomal subunit"/>
    <property type="evidence" value="ECO:0007669"/>
    <property type="project" value="TreeGrafter"/>
</dbReference>
<dbReference type="GO" id="GO:0019843">
    <property type="term" value="F:rRNA binding"/>
    <property type="evidence" value="ECO:0007669"/>
    <property type="project" value="UniProtKB-UniRule"/>
</dbReference>
<dbReference type="GO" id="GO:0003735">
    <property type="term" value="F:structural constituent of ribosome"/>
    <property type="evidence" value="ECO:0007669"/>
    <property type="project" value="InterPro"/>
</dbReference>
<dbReference type="GO" id="GO:0006412">
    <property type="term" value="P:translation"/>
    <property type="evidence" value="ECO:0007669"/>
    <property type="project" value="UniProtKB-UniRule"/>
</dbReference>
<dbReference type="FunFam" id="3.100.10.10:FF:000003">
    <property type="entry name" value="50S ribosomal protein L15"/>
    <property type="match status" value="1"/>
</dbReference>
<dbReference type="Gene3D" id="3.100.10.10">
    <property type="match status" value="1"/>
</dbReference>
<dbReference type="HAMAP" id="MF_01341">
    <property type="entry name" value="Ribosomal_uL15"/>
    <property type="match status" value="1"/>
</dbReference>
<dbReference type="InterPro" id="IPR030878">
    <property type="entry name" value="Ribosomal_uL15"/>
</dbReference>
<dbReference type="InterPro" id="IPR021131">
    <property type="entry name" value="Ribosomal_uL15/eL18"/>
</dbReference>
<dbReference type="InterPro" id="IPR036227">
    <property type="entry name" value="Ribosomal_uL15/eL18_sf"/>
</dbReference>
<dbReference type="InterPro" id="IPR005749">
    <property type="entry name" value="Ribosomal_uL15_bac-type"/>
</dbReference>
<dbReference type="InterPro" id="IPR001196">
    <property type="entry name" value="Ribosomal_uL15_CS"/>
</dbReference>
<dbReference type="NCBIfam" id="TIGR01071">
    <property type="entry name" value="rplO_bact"/>
    <property type="match status" value="1"/>
</dbReference>
<dbReference type="PANTHER" id="PTHR12934">
    <property type="entry name" value="50S RIBOSOMAL PROTEIN L15"/>
    <property type="match status" value="1"/>
</dbReference>
<dbReference type="PANTHER" id="PTHR12934:SF11">
    <property type="entry name" value="LARGE RIBOSOMAL SUBUNIT PROTEIN UL15M"/>
    <property type="match status" value="1"/>
</dbReference>
<dbReference type="Pfam" id="PF00828">
    <property type="entry name" value="Ribosomal_L27A"/>
    <property type="match status" value="1"/>
</dbReference>
<dbReference type="SUPFAM" id="SSF52080">
    <property type="entry name" value="Ribosomal proteins L15p and L18e"/>
    <property type="match status" value="1"/>
</dbReference>
<dbReference type="PROSITE" id="PS00475">
    <property type="entry name" value="RIBOSOMAL_L15"/>
    <property type="match status" value="1"/>
</dbReference>
<name>RL15_PSEAB</name>
<evidence type="ECO:0000255" key="1">
    <source>
        <dbReference type="HAMAP-Rule" id="MF_01341"/>
    </source>
</evidence>
<evidence type="ECO:0000256" key="2">
    <source>
        <dbReference type="SAM" id="MobiDB-lite"/>
    </source>
</evidence>
<evidence type="ECO:0000305" key="3"/>
<organism>
    <name type="scientific">Pseudomonas aeruginosa (strain UCBPP-PA14)</name>
    <dbReference type="NCBI Taxonomy" id="208963"/>
    <lineage>
        <taxon>Bacteria</taxon>
        <taxon>Pseudomonadati</taxon>
        <taxon>Pseudomonadota</taxon>
        <taxon>Gammaproteobacteria</taxon>
        <taxon>Pseudomonadales</taxon>
        <taxon>Pseudomonadaceae</taxon>
        <taxon>Pseudomonas</taxon>
    </lineage>
</organism>
<keyword id="KW-0687">Ribonucleoprotein</keyword>
<keyword id="KW-0689">Ribosomal protein</keyword>
<keyword id="KW-0694">RNA-binding</keyword>
<keyword id="KW-0699">rRNA-binding</keyword>
<accession>Q02T61</accession>
<protein>
    <recommendedName>
        <fullName evidence="1">Large ribosomal subunit protein uL15</fullName>
    </recommendedName>
    <alternativeName>
        <fullName evidence="3">50S ribosomal protein L15</fullName>
    </alternativeName>
</protein>
<gene>
    <name evidence="1" type="primary">rplO</name>
    <name type="ordered locus">PA14_09040</name>
</gene>
<proteinExistence type="inferred from homology"/>
<reference key="1">
    <citation type="journal article" date="2006" name="Genome Biol.">
        <title>Genomic analysis reveals that Pseudomonas aeruginosa virulence is combinatorial.</title>
        <authorList>
            <person name="Lee D.G."/>
            <person name="Urbach J.M."/>
            <person name="Wu G."/>
            <person name="Liberati N.T."/>
            <person name="Feinbaum R.L."/>
            <person name="Miyata S."/>
            <person name="Diggins L.T."/>
            <person name="He J."/>
            <person name="Saucier M."/>
            <person name="Deziel E."/>
            <person name="Friedman L."/>
            <person name="Li L."/>
            <person name="Grills G."/>
            <person name="Montgomery K."/>
            <person name="Kucherlapati R."/>
            <person name="Rahme L.G."/>
            <person name="Ausubel F.M."/>
        </authorList>
    </citation>
    <scope>NUCLEOTIDE SEQUENCE [LARGE SCALE GENOMIC DNA]</scope>
    <source>
        <strain>UCBPP-PA14</strain>
    </source>
</reference>
<feature type="chain" id="PRO_1000054518" description="Large ribosomal subunit protein uL15">
    <location>
        <begin position="1"/>
        <end position="144"/>
    </location>
</feature>
<feature type="region of interest" description="Disordered" evidence="2">
    <location>
        <begin position="1"/>
        <end position="57"/>
    </location>
</feature>
<feature type="compositionally biased region" description="Gly residues" evidence="2">
    <location>
        <begin position="21"/>
        <end position="31"/>
    </location>
</feature>
<sequence length="144" mass="15174">MQLNDLRSAPGARREKHRPGRGIGSGLGKTGGRGHKGLTSRSGGKVAPGFEGGQQPLHRRLPKFGFVSLKAMDRAEVRTSELAKVEGDVVSLQTLKDANLINQHVQRVKVMLSGEVGRAVTLKGIAATKGARAAIEAAGGKFED</sequence>